<name>OLSE_RHITR</name>
<organism>
    <name type="scientific">Rhizobium tropici</name>
    <dbReference type="NCBI Taxonomy" id="398"/>
    <lineage>
        <taxon>Bacteria</taxon>
        <taxon>Pseudomonadati</taxon>
        <taxon>Pseudomonadota</taxon>
        <taxon>Alphaproteobacteria</taxon>
        <taxon>Hyphomicrobiales</taxon>
        <taxon>Rhizobiaceae</taxon>
        <taxon>Rhizobium/Agrobacterium group</taxon>
        <taxon>Rhizobium</taxon>
    </lineage>
</organism>
<accession>F2VS69</accession>
<reference key="1">
    <citation type="journal article" date="2011" name="Mol. Microbiol.">
        <title>Hydroxylated ornithine lipids increase stress tolerance in Rhizobium tropici CIAT899.</title>
        <authorList>
            <person name="Vences-Guzman M.A."/>
            <person name="Guan Z."/>
            <person name="Ormeno-Orrillo E."/>
            <person name="Gonzalez-Silva N."/>
            <person name="Lopez-Lara I.M."/>
            <person name="Martinez-Romero E."/>
            <person name="Geiger O."/>
            <person name="Sohlenkamp C."/>
        </authorList>
    </citation>
    <scope>NUCLEOTIDE SEQUENCE [GENOMIC DNA]</scope>
    <scope>FUNCTION</scope>
    <scope>DISRUPTION PHENOTYPE</scope>
    <source>
        <strain>CIAT899</strain>
    </source>
</reference>
<sequence length="331" mass="37014">MIFQSSSRLYAAVSSLLWPAILCAGLTGAYFAFRSDMHLLWFNVVYLSTVAIIALFERLMPYEKTWQKRDGETFNDIAHTLLTKGGVQIAAAIGTSFPMAVATVAQPALSYHSHFWPDQWPMAFQVVLGLVIAEFGLYMAHRLAHEHLSLWRFHALHHSVGRLWVINTGRFHFIDTLFKIALGQIPLYLLGAPLPVFLWIGAVTAFIGLLTHCNVDMRTGPLDLIFSTPRLHRWHHSKVLAEGNTNYGENLVIWDQLLGTFHNPPRPSSTDIGITGKVAKGFLAQLAQPFSRKGRKEIIGKKPKELILQEEQAAKAAAARRNANAKIRKSG</sequence>
<dbReference type="EC" id="1.-.-.-" evidence="5"/>
<dbReference type="EMBL" id="HM010770">
    <property type="protein sequence ID" value="ADO32592.1"/>
    <property type="molecule type" value="Genomic_DNA"/>
</dbReference>
<dbReference type="RefSeq" id="WP_015340785.1">
    <property type="nucleotide sequence ID" value="NZ_JACIFW010000012.1"/>
</dbReference>
<dbReference type="STRING" id="698761.RTCIAT899_CH13565"/>
<dbReference type="PATRIC" id="fig|698761.4.peg.2778"/>
<dbReference type="eggNOG" id="COG3000">
    <property type="taxonomic scope" value="Bacteria"/>
</dbReference>
<dbReference type="HOGENOM" id="CLU_033631_3_2_5"/>
<dbReference type="GO" id="GO:0005886">
    <property type="term" value="C:plasma membrane"/>
    <property type="evidence" value="ECO:0007669"/>
    <property type="project" value="UniProtKB-SubCell"/>
</dbReference>
<dbReference type="GO" id="GO:0005506">
    <property type="term" value="F:iron ion binding"/>
    <property type="evidence" value="ECO:0007669"/>
    <property type="project" value="InterPro"/>
</dbReference>
<dbReference type="GO" id="GO:0016491">
    <property type="term" value="F:oxidoreductase activity"/>
    <property type="evidence" value="ECO:0007669"/>
    <property type="project" value="UniProtKB-KW"/>
</dbReference>
<dbReference type="GO" id="GO:0008610">
    <property type="term" value="P:lipid biosynthetic process"/>
    <property type="evidence" value="ECO:0007669"/>
    <property type="project" value="InterPro"/>
</dbReference>
<dbReference type="InterPro" id="IPR006694">
    <property type="entry name" value="Fatty_acid_hydroxylase"/>
</dbReference>
<dbReference type="InterPro" id="IPR050307">
    <property type="entry name" value="Sterol_Desaturase_Related"/>
</dbReference>
<dbReference type="PANTHER" id="PTHR11863">
    <property type="entry name" value="STEROL DESATURASE"/>
    <property type="match status" value="1"/>
</dbReference>
<dbReference type="Pfam" id="PF04116">
    <property type="entry name" value="FA_hydroxylase"/>
    <property type="match status" value="1"/>
</dbReference>
<feature type="chain" id="PRO_0000457775" description="Ornithine lipid hydroxylase OlsE">
    <location>
        <begin position="1"/>
        <end position="331"/>
    </location>
</feature>
<feature type="transmembrane region" description="Helical" evidence="1">
    <location>
        <begin position="13"/>
        <end position="33"/>
    </location>
</feature>
<feature type="transmembrane region" description="Helical" evidence="1">
    <location>
        <begin position="37"/>
        <end position="57"/>
    </location>
</feature>
<feature type="transmembrane region" description="Helical" evidence="1">
    <location>
        <begin position="85"/>
        <end position="105"/>
    </location>
</feature>
<feature type="transmembrane region" description="Helical" evidence="1">
    <location>
        <begin position="120"/>
        <end position="140"/>
    </location>
</feature>
<feature type="transmembrane region" description="Helical" evidence="1">
    <location>
        <begin position="189"/>
        <end position="209"/>
    </location>
</feature>
<feature type="domain" description="Fatty acid hydroxylase" evidence="1">
    <location>
        <begin position="126"/>
        <end position="260"/>
    </location>
</feature>
<comment type="function">
    <text evidence="2">Involved in the biosynthesis of ornithine lipids (OLs), which are phosphorus-free membrane lipids (PubMed:21205018). Is responsible for the hydroxylation of OL within the ornithine moiety (PubMed:21205018).</text>
</comment>
<comment type="pathway">
    <text evidence="5">Lipid metabolism.</text>
</comment>
<comment type="subcellular location">
    <subcellularLocation>
        <location evidence="4">Cell inner membrane</location>
        <topology evidence="1">Multi-pass membrane protein</topology>
    </subcellularLocation>
</comment>
<comment type="disruption phenotype">
    <text evidence="2">Mutation affects the membrane lipid composition, particularly ornithine lipids (PubMed:21205018). Mutant is deficient in OL hydroxylation (PubMed:21205018).</text>
</comment>
<comment type="similarity">
    <text evidence="4">Belongs to the sterol desaturase family.</text>
</comment>
<keyword id="KW-0997">Cell inner membrane</keyword>
<keyword id="KW-1003">Cell membrane</keyword>
<keyword id="KW-0444">Lipid biosynthesis</keyword>
<keyword id="KW-0443">Lipid metabolism</keyword>
<keyword id="KW-0472">Membrane</keyword>
<keyword id="KW-0560">Oxidoreductase</keyword>
<keyword id="KW-0812">Transmembrane</keyword>
<keyword id="KW-1133">Transmembrane helix</keyword>
<evidence type="ECO:0000255" key="1"/>
<evidence type="ECO:0000269" key="2">
    <source>
    </source>
</evidence>
<evidence type="ECO:0000303" key="3">
    <source>
    </source>
</evidence>
<evidence type="ECO:0000305" key="4"/>
<evidence type="ECO:0000305" key="5">
    <source>
    </source>
</evidence>
<protein>
    <recommendedName>
        <fullName evidence="3">Ornithine lipid hydroxylase OlsE</fullName>
        <shortName evidence="3">OL hydroxylase OlsE</shortName>
        <ecNumber evidence="5">1.-.-.-</ecNumber>
    </recommendedName>
</protein>
<proteinExistence type="inferred from homology"/>
<gene>
    <name evidence="3" type="primary">olsE</name>
</gene>